<proteinExistence type="evidence at protein level"/>
<organism>
    <name type="scientific">Rattus norvegicus</name>
    <name type="common">Rat</name>
    <dbReference type="NCBI Taxonomy" id="10116"/>
    <lineage>
        <taxon>Eukaryota</taxon>
        <taxon>Metazoa</taxon>
        <taxon>Chordata</taxon>
        <taxon>Craniata</taxon>
        <taxon>Vertebrata</taxon>
        <taxon>Euteleostomi</taxon>
        <taxon>Mammalia</taxon>
        <taxon>Eutheria</taxon>
        <taxon>Euarchontoglires</taxon>
        <taxon>Glires</taxon>
        <taxon>Rodentia</taxon>
        <taxon>Myomorpha</taxon>
        <taxon>Muroidea</taxon>
        <taxon>Muridae</taxon>
        <taxon>Murinae</taxon>
        <taxon>Rattus</taxon>
    </lineage>
</organism>
<protein>
    <recommendedName>
        <fullName>High mobility group protein B1</fullName>
    </recommendedName>
    <alternativeName>
        <fullName>Amphoterin</fullName>
    </alternativeName>
    <alternativeName>
        <fullName>Heparin-binding protein p30</fullName>
    </alternativeName>
    <alternativeName>
        <fullName>High mobility group protein 1</fullName>
        <shortName>HMG-1</shortName>
    </alternativeName>
</protein>
<evidence type="ECO:0000250" key="1">
    <source>
        <dbReference type="UniProtKB" id="P09429"/>
    </source>
</evidence>
<evidence type="ECO:0000250" key="2">
    <source>
        <dbReference type="UniProtKB" id="P10103"/>
    </source>
</evidence>
<evidence type="ECO:0000250" key="3">
    <source>
        <dbReference type="UniProtKB" id="P63158"/>
    </source>
</evidence>
<evidence type="ECO:0000255" key="4">
    <source>
        <dbReference type="PROSITE-ProRule" id="PRU00267"/>
    </source>
</evidence>
<evidence type="ECO:0000256" key="5">
    <source>
        <dbReference type="SAM" id="MobiDB-lite"/>
    </source>
</evidence>
<evidence type="ECO:0000269" key="6">
    <source>
    </source>
</evidence>
<evidence type="ECO:0000269" key="7">
    <source>
    </source>
</evidence>
<evidence type="ECO:0000269" key="8">
    <source>
    </source>
</evidence>
<evidence type="ECO:0000269" key="9">
    <source>
    </source>
</evidence>
<evidence type="ECO:0000269" key="10">
    <source>
    </source>
</evidence>
<evidence type="ECO:0000269" key="11">
    <source>
    </source>
</evidence>
<evidence type="ECO:0000269" key="12">
    <source>
    </source>
</evidence>
<evidence type="ECO:0000269" key="13">
    <source>
    </source>
</evidence>
<evidence type="ECO:0000269" key="14">
    <source>
    </source>
</evidence>
<evidence type="ECO:0000269" key="15">
    <source>
    </source>
</evidence>
<evidence type="ECO:0000269" key="16">
    <source>
    </source>
</evidence>
<evidence type="ECO:0000269" key="17">
    <source>
    </source>
</evidence>
<evidence type="ECO:0000269" key="18">
    <source>
    </source>
</evidence>
<evidence type="ECO:0000269" key="19">
    <source>
    </source>
</evidence>
<evidence type="ECO:0000269" key="20">
    <source>
    </source>
</evidence>
<evidence type="ECO:0000269" key="21">
    <source>
    </source>
</evidence>
<evidence type="ECO:0000269" key="22">
    <source>
    </source>
</evidence>
<evidence type="ECO:0000269" key="23">
    <source>
    </source>
</evidence>
<evidence type="ECO:0000269" key="24">
    <source>
    </source>
</evidence>
<evidence type="ECO:0000269" key="25">
    <source>
    </source>
</evidence>
<evidence type="ECO:0000269" key="26">
    <source>
    </source>
</evidence>
<evidence type="ECO:0000269" key="27">
    <source>
    </source>
</evidence>
<evidence type="ECO:0000305" key="28"/>
<evidence type="ECO:0000305" key="29">
    <source>
    </source>
</evidence>
<evidence type="ECO:0000305" key="30">
    <source>
    </source>
</evidence>
<evidence type="ECO:0000305" key="31">
    <source>
    </source>
</evidence>
<evidence type="ECO:0000305" key="32">
    <source>
    </source>
</evidence>
<evidence type="ECO:0000305" key="33">
    <source>
    </source>
</evidence>
<evidence type="ECO:0000305" key="34">
    <source>
    </source>
</evidence>
<evidence type="ECO:0000305" key="35">
    <source>
    </source>
</evidence>
<evidence type="ECO:0007829" key="36">
    <source>
        <dbReference type="PDB" id="1AAB"/>
    </source>
</evidence>
<evidence type="ECO:0007829" key="37">
    <source>
        <dbReference type="PDB" id="1HME"/>
    </source>
</evidence>
<evidence type="ECO:0007829" key="38">
    <source>
        <dbReference type="PDB" id="2GZK"/>
    </source>
</evidence>
<evidence type="ECO:0007829" key="39">
    <source>
        <dbReference type="PDB" id="4QR9"/>
    </source>
</evidence>
<comment type="function">
    <text evidence="1 2 3 9 12 20 25 27 31 32 33 34">Multifunctional redox sensitive protein with various roles in different cellular compartments. In the nucleus is one of the major chromatin-associated non-histone proteins and acts as a DNA chaperone involved in replication, transcription, chromatin remodeling, V(D)J recombination, DNA repair and genome stability. Proposed to be an universal biosensor for nucleic acids. Promotes host inflammatory response to sterile and infectious signals and is involved in the coordination and integration of innate and adaptive immune responses. In the cytoplasm functions as a sensor and/or chaperone for immunogenic nucleic acids implicating the activation of TLR9-mediated immune responses, and mediates autophagy. Acts as a danger-associated molecular pattern (DAMP) molecule that amplifies immune responses during tissue injury. Released to the extracellular environment can bind DNA, nucleosomes, IL-1 beta, CXCL12, AGER isoform 2/sRAGE, lipopolysaccharide (LPS) and lipoteichoic acid (LTA), and activates cells through engagement of multiple surface receptors. In the extracellular compartment fully reduced HMGB1 (released by necrosis) acts as a chemokine, disulfide HMGB1 (actively secreted) as a cytokine, and sulfonyl HMGB1 (released from apoptotic cells) promotes immunological tolerance (PubMed:23446148, PubMed:23519706, PubMed:23994764, PubMed:25048472). Has proangiogenic activity. May be involved in platelet activation. Binds to phosphatidylserine and phosphatidylethanolamide (PubMed:11154118). Bound to RAGE mediates signaling for neuronal outgrowth (PubMed:12183440, PubMed:1885601, PubMed:2461949, PubMed:7592757). May play a role in accumulation of expanded polyglutamine (polyQ) proteins.</text>
</comment>
<comment type="function">
    <text evidence="1 2 3 7 10 13 24 26">Nuclear functions are attributed to fully reduced HGMB1. Associates with chromatin and binds DNA with a preference to non-canonical DNA structures such as single-stranded DNA, DNA-containing cruciforms or bent structures, supercoiled DNA and ZDNA (PubMed:11513603, PubMed:2922595). Can bent DNA and enhance DNA flexibility by looping thus providing a mechanism to promote activities on various gene promoters by enhancing transcription factor binding and/or bringing distant regulatory sequences into close proximity (PubMed:12486007). May be involved in nucleotide excision repair (NER), mismatch repair (MMR) and base excision repair (BER) pathways, and double strand break repair such as non-homologous end joining (NHEJ) (PubMed:10866811). Involved in V(D)J recombination by acting as a cofactor of the RAG complex: acts by stimulating cleavage and RAG protein binding at the 23 bp spacer of conserved recombination signal sequences (RSS) (By similarity). In vitro can displace histone H1 from highly bent DNA (PubMed:24551219). Can restructure the canonical nucleosome leading to relaxation of structural constraints for transcription factor-binding (By similarity). Enhances binding of sterol regulatory element-binding proteins (SREBPs) such as SREBF1 to their cognate DNA sequences and increases their transcriptional activities (By similarity). Facilitates binding of TP53 to DNA (By similarity). May be involved in mitochondrial quality control and autophagy in a transcription-dependent fashion implicating HSPB1 (By similarity). Can modulate the activity of the telomerase complex and may be involved in telomere maintenance (By similarity).</text>
</comment>
<comment type="function">
    <text evidence="1 3">In the cytoplasm proposed to dissociate the BECN1:BCL2 complex via competitive interaction with BECN1 leading to autophagy activation (By similarity). Can protect BECN1 and ATG5 from calpain-mediated cleavage and thus proposed to control their proautophagic and proapoptotic functions and to regulate the extent and severity of inflammation-associated cellular injury (By similarity). In myeloid cells has a protective role against endotoxemia and bacterial infection by promoting autophagy (By similarity). Involved in endosomal translocation and activation of TLR9 in response to CpG-DNA in macrophages (By similarity).</text>
</comment>
<comment type="function">
    <text evidence="1 2 3 6 8 19 23">In the extracellular compartment (following either active secretion or passive release) involved in regulation of the inflammatory response. Fully reduced HGMB1 (which subsequently gets oxidized after release) in association with CXCL12 mediates the recruitment of inflammatory cells during the initial phase of tissue injury; the CXCL12:HMGB1 complex triggers CXCR4 homodimerization (PubMed:22869893). Induces the migration of monocyte-derived immature dendritic cells and seems to regulate adhesive and migratory functions of neutrophils implicating AGER/RAGE and ITGAM (By similarity). Can bind to various types of DNA and RNA including microbial unmethylated CpG-DNA to enhance the innate immune response to nucleic acids. Proposed to act in promiscuous DNA/RNA sensing which cooperates with subsequent discriminative sensing by specific pattern recognition receptors. Promotes extracellular DNA-induced AIM2 inflammasome activation implicating AGER/RAGE (By similarity). Disulfide HMGB1 binds to transmembrane receptors, such as AGER/RAGE, TLR2, TLR4 and probably TREM1, thus activating their signal transduction pathways. Mediates the release of cytokines/chemokines such as TNF, IL-1, IL-6, IL-8, CCL2, CCL3, CCL4 and CXCL10 (PubMed:10952726, PubMed:20547845, PubMed:22869893). Promotes secretion of interferon-gamma by macrophage-stimulated natural killer (NK) cells in concert with other cytokines like IL-2 or IL-12. TLR4 is proposed to be the primary receptor promoting macrophage activation and signaling through TLR4 seems to implicate LY96/MD-2 (By similarity). In bacterial LPS- or LTA-mediated inflammatory responses binds to the endotoxins and transfers them to CD14 for signaling to the respective TLR4:LY96 and TLR2 complexes (PubMed:23508573). Contributes to tumor proliferation by association with ACER/RAGE (PubMed:10830965). Can bind to IL1-beta and signals through the IL1R1:IL1RAP receptor complex (By similarity). Binding to class A CpG activates cytokine production in plasmacytoid dendritic cells implicating TLR9, MYD88 and AGER/RAGE and can activate autoreactive B cells (By similarity). Via HMGB1-containing chromatin immune complexes may also promote B cell responses to endogenous TLR9 ligands through a B-cell receptor (BCR)-dependent and ACER/RAGE-independent mechanism (By similarity). Inhibits phagocytosis of apoptotic cells by macrophages; the function is dependent on poly-ADP-ribosylation and involves binding to phosphatidylserine on the cell surface of apoptotic cells (By similarity). In adaptive immunity may be involved in enhancing immunity through activation of effector T-cells and suppression of regulatory T (TReg) cells (By similarity). In contrast, without implicating effector or regulatory T-cells, required for tumor infiltration and activation of T-cells expressing the lymphotoxin LTA:LTB heterotrimer thus promoting tumor malignant progression (By similarity). Also reported to limit proliferation of T-cells (PubMed:18277947). Released HMGB1:nucleosome complexes formed during apoptosis can signal through TLR2 to induce cytokine production. Involved in induction of immunological tolerance by apoptotic cells; its pro-inflammatory activities when released by apoptotic cells are neutralized by reactive oxygen species (ROS)-dependent oxidation specifically on Cys-106 (By similarity). During macrophage activation by activated lymphocyte-derived self apoptotic DNA (ALD-DNA) promotes recruitment of ALD-DNA to endosomes (By similarity).</text>
</comment>
<comment type="subunit">
    <text evidence="1 3 12 14 21 22 23">Interacts (fully reduced HMGB1) with CXCL12; probably in a 1:2 ratio involving two molecules of CXCL12, each interacting with one HMG box of HMGB1; inhibited by glycyrrhizin (PubMed:22869893). Associates with the TLR4:LY96 receptor complex (PubMed:20547845). Component of the RAG complex composed of core components RAG1 and RAG2, and associated component HMGB1 or HMGB2 (By similarity). Interacts (in cytoplasm upon starvation) with BECN1; inhibits the interaction of BECN1 and BCL2 leading to promotion of autophagy (PubMed:20819940). Interacts with KPNA1; involved in nuclear import (By similarity). Interacts with AGER (PubMed:12183440). Interacts with PTPRZ1 isoform 3/phosphacan (PubMed:9507007). Interacts with SREBF1, TLR2, TLR4, TLR9, APEX1, FEN1, POLB, TERT, IL1B, MSH2, XPA, XPC, HNF1A, TP53 (By similarity). Interacts with CD24; the probable CD24:SIGLEC10 complex is proposed to inhibit HGMB1-mediated tissue damage immune response. Interacts with THBD; prevents HGMB1 interaction with ACER/RAGE and inhibits HGMB1 pro-inflammatory activity. Interacts with HAVCR2; impairs HMGB1 binding to B-DNA and likely HMGB1-mediated innate immune response (By similarity). Interacts with XPO1; mediating nuclear export (PubMed:14532127). Interacts with receptor RAGE/AGER (By similarity).</text>
</comment>
<comment type="subcellular location">
    <subcellularLocation>
        <location evidence="23">Nucleus</location>
    </subcellularLocation>
    <subcellularLocation>
        <location evidence="23">Cytoplasm</location>
    </subcellularLocation>
    <subcellularLocation>
        <location evidence="20 23">Secreted</location>
    </subcellularLocation>
    <subcellularLocation>
        <location evidence="11 16">Chromosome</location>
    </subcellularLocation>
    <subcellularLocation>
        <location evidence="20 25">Cell membrane</location>
        <topology evidence="20 25">Peripheral membrane protein</topology>
        <orientation evidence="25">Extracellular side</orientation>
    </subcellularLocation>
    <subcellularLocation>
        <location evidence="3">Endosome</location>
    </subcellularLocation>
    <subcellularLocation>
        <location evidence="3">Endoplasmic reticulum-Golgi intermediate compartment</location>
    </subcellularLocation>
    <text evidence="3 14 16 20 23">In basal state predominantly nuclear. Shuttles between the cytoplasm and the nucleus. Nuclear export is in part XPO1-dependent implicating NES contained in both HMG boxes 1 and 2 (PubMed:14532127). Release from macrophages in the extracellular milieu requires the activation of NLRC4 or NLRP3 inflammasomes (By similarity). Passively released to the extracellular milieu from necrotic cells by diffusion, involving the fully reduced form which subsequently gets oxidized (PubMed:22869893). Actively secreted from a variety of immune and non-immune cells such as macrophages, monocytes, neutrophils, dendritic cells and natural killer cells in response to various stimuli, involving a nonconventional secretory process via secretory lysosomes. Secreted by plasma cells in response to LPS (By similarity). Associated with the plasma membrane of filipodia in process-growing cells, and also deposited into the substrate-attached material (PubMed:1885601).</text>
</comment>
<comment type="domain">
    <text evidence="10 15">The acidic C-terminal domain forms a flexible structure which can reversibly interact intramolecularily with the HMG boxes and modulate binding to DNA and other proteins.</text>
</comment>
<comment type="PTM">
    <text evidence="1">Phosphorylated at serine residues. Phosphorylation in both NLS regions is required for cytoplasmic translocation followed by secretion.</text>
</comment>
<comment type="PTM">
    <text evidence="2 14 18">Acetylated on multiple sites upon stimulation with LPS (By similarity). Acetylation on lysine residues in the nuclear localization signals (NLS 1 and NLS 2) leads to cytoplasmic localization and subsequent secretion (PubMed:14532127). Acetylation on Lys-3 results in preferential binding to DNA ends and impairs DNA bending activity (PubMed:17269659).</text>
</comment>
<comment type="PTM">
    <text evidence="17 23 24 28">Reduction/oxidation of cysteine residues Cys-23, Cys-45 and Cys-106 and a possible intramolecular disulfide bond involving Cys-23 and Cys-45 give rise to different redox forms with specific functional activities in various cellular compartments: 1- fully reduced HMGB1 (HMGB1C23hC45hC106h), 2- disulfide HMGB1 (HMGB1C23-C45C106h) and 3- sulfonyl HMGB1 (HMGB1C23soC45soC106so).</text>
</comment>
<comment type="PTM">
    <text evidence="3">Poly-ADP-ribosylated by PARP1 when secreted following stimulation with LPS.</text>
</comment>
<comment type="PTM">
    <text evidence="1 2">In vitro cleavage by CASP1 is liberating a HMG box 1-containing peptide which may mediate immunogenic activity; the peptide antagonizes apoptosis-induced immune tolerance. Can be proteolytically cleaved by a thrombin:thrombomodulin complex; reduces binding to heparin and pro-inflammatory activities (By similarity).</text>
</comment>
<comment type="PTM">
    <text evidence="1">Forms covalent cross-links mediated by transglutaminase TGM2, between a glutamine and the epsilon-amino group of a lysine residue, forming homopolymers and heteropolymers.</text>
</comment>
<comment type="similarity">
    <text evidence="28">Belongs to the HMGB family.</text>
</comment>
<comment type="caution">
    <text evidence="29 35">Was reported that reduction/oxidation of cysteine residues Cys-23, Cys-45 and Cys-106 and a possible intramolecular disulfide bond involving Cys-23 and Cys-45 give rise to different redox forms with specific functional activities. However, this work was later retracted, although the roles of different redox forms in some functional activities is supported by other papers.</text>
</comment>
<reference key="1">
    <citation type="journal article" date="1987" name="Nucleic Acids Res.">
        <title>Nucleotide sequence of rat liver HMG1 cDNA.</title>
        <authorList>
            <person name="Paonessa G."/>
            <person name="Frank R."/>
            <person name="Cortese R."/>
        </authorList>
    </citation>
    <scope>NUCLEOTIDE SEQUENCE [MRNA]</scope>
    <source>
        <strain>Sprague-Dawley</strain>
        <tissue>Liver</tissue>
    </source>
</reference>
<reference key="2">
    <citation type="submission" date="1988-12" db="EMBL/GenBank/DDBJ databases">
        <authorList>
            <person name="Bianchi M."/>
        </authorList>
    </citation>
    <scope>SEQUENCE REVISION</scope>
</reference>
<reference key="3">
    <citation type="journal article" date="1991" name="J. Biol. Chem.">
        <title>30-kDa heparin-binding protein of brain (amphoterin) involved in neurite outgrowth. Amino acid sequence and localization in the filopodia of the advancing plasma membrane.</title>
        <authorList>
            <person name="Merenmies J."/>
            <person name="Pihlaskari R."/>
            <person name="Laitinen J."/>
            <person name="Wartiovaara J."/>
            <person name="Rauvala H."/>
        </authorList>
    </citation>
    <scope>NUCLEOTIDE SEQUENCE [MRNA]</scope>
    <scope>PARTIAL PROTEIN SEQUENCE</scope>
    <scope>SUBCELLULAR LOCATION</scope>
    <scope>FUNCTION</scope>
</reference>
<reference key="4">
    <citation type="submission" date="2000-06" db="EMBL/GenBank/DDBJ databases">
        <title>Amphoterin is associated with the development of the kidney.</title>
        <authorList>
            <person name="Ito T."/>
            <person name="Suzuki A."/>
            <person name="Horimoto N."/>
            <person name="Imai E."/>
            <person name="Hori M."/>
        </authorList>
    </citation>
    <scope>NUCLEOTIDE SEQUENCE [MRNA]</scope>
    <source>
        <strain>Sprague-Dawley</strain>
        <tissue>Kidney</tissue>
    </source>
</reference>
<reference key="5">
    <citation type="journal article" date="2004" name="Genome Res.">
        <title>The status, quality, and expansion of the NIH full-length cDNA project: the Mammalian Gene Collection (MGC).</title>
        <authorList>
            <consortium name="The MGC Project Team"/>
        </authorList>
    </citation>
    <scope>NUCLEOTIDE SEQUENCE [LARGE SCALE MRNA]</scope>
    <source>
        <tissue>Kidney</tissue>
        <tissue>Prostate</tissue>
        <tissue>Testis</tissue>
    </source>
</reference>
<reference key="6">
    <citation type="journal article" date="1988" name="J. Cell Biol.">
        <title>The adhesive and neurite-promoting molecule p30: analysis of the amino-terminal sequence and production of antipeptide antibodies that detect p30 at the surface of neuroblastoma cells and of brain neurons.</title>
        <authorList>
            <person name="Rauvala H."/>
            <person name="Merenmies J."/>
            <person name="Pihlaskari R."/>
            <person name="Korkolainen M."/>
            <person name="Huhtala M.L."/>
            <person name="Panula P."/>
        </authorList>
    </citation>
    <scope>PROTEIN SEQUENCE OF 2-21</scope>
    <scope>SUBCELLULAR LOCATION</scope>
    <scope>FUNCTION</scope>
</reference>
<reference key="7">
    <citation type="journal article" date="1989" name="Science">
        <title>Specific recognition of cruciform DNA by nuclear protein HMG1.</title>
        <authorList>
            <person name="Bianchi M.E."/>
            <person name="Beltrame M."/>
            <person name="Paonessa G."/>
        </authorList>
    </citation>
    <scope>DNA-BINDING</scope>
</reference>
<reference key="8">
    <citation type="journal article" date="1995" name="J. Biol. Chem.">
        <title>The receptor for advanced glycation end products (RAGE) is a cellular binding site for amphoterin. Mediation of neurite outgrowth and co-expression of rage and amphoterin in the developing nervous system.</title>
        <authorList>
            <person name="Hori O."/>
            <person name="Brett J."/>
            <person name="Slattery T."/>
            <person name="Cao R."/>
            <person name="Zhang J."/>
            <person name="Chen J.X."/>
            <person name="Nagashima M."/>
            <person name="Lundh E.R."/>
            <person name="Vijay S."/>
            <person name="Nitecki D."/>
        </authorList>
    </citation>
    <scope>FUNCTION</scope>
</reference>
<reference key="9">
    <citation type="journal article" date="1998" name="J. Biol. Chem.">
        <title>High affinity binding and overlapping localization of neurocan and phosphacan/protein-tyrosine phosphatase-zeta/beta with tenascin-R, amphoterin, and the heparin-binding growth-associated molecule.</title>
        <authorList>
            <person name="Milev P."/>
            <person name="Chiba A."/>
            <person name="Haring M."/>
            <person name="Rauvala H."/>
            <person name="Schachner M."/>
            <person name="Ranscht B."/>
            <person name="Margolis R.K."/>
            <person name="Margolis R.U."/>
        </authorList>
    </citation>
    <scope>INTERACTION WITH PTPRZ1</scope>
</reference>
<reference key="10">
    <citation type="journal article" date="2000" name="Eur. J. Biochem.">
        <title>HMG1 protein stimulates DNA end joining by promoting association of DNA molecules via their ends.</title>
        <authorList>
            <person name="Stros M."/>
            <person name="Cherny D."/>
            <person name="Jovin T.M."/>
        </authorList>
    </citation>
    <scope>FUNCTION</scope>
</reference>
<reference key="11">
    <citation type="journal article" date="2000" name="J. Exp. Med.">
        <title>High mobility group 1 protein (HMG-1) stimulates proinflammatory cytokine synthesis in human monocytes.</title>
        <authorList>
            <person name="Andersson U."/>
            <person name="Wang H."/>
            <person name="Palmblad K."/>
            <person name="Aveberger A.C."/>
            <person name="Bloom O."/>
            <person name="Erlandsson-Harris H."/>
            <person name="Janson A."/>
            <person name="Kokkola R."/>
            <person name="Zhang M."/>
            <person name="Yang H."/>
            <person name="Tracey K.J."/>
        </authorList>
    </citation>
    <scope>FUNCTION</scope>
</reference>
<reference key="12">
    <citation type="journal article" date="2000" name="Nature">
        <title>Blockade of RAGE-amphoterin signalling suppresses tumour growth and metastases.</title>
        <authorList>
            <person name="Taguchi A."/>
            <person name="Blood D.C."/>
            <person name="del Toro G."/>
            <person name="Canet A."/>
            <person name="Lee D.C."/>
            <person name="Qu W."/>
            <person name="Tanji N."/>
            <person name="Lu Y."/>
            <person name="Lalla E."/>
            <person name="Fu C."/>
            <person name="Hofmann M.A."/>
            <person name="Kislinger T."/>
            <person name="Ingram M."/>
            <person name="Lu A."/>
            <person name="Tanaka H."/>
            <person name="Hori O."/>
            <person name="Ogawa S."/>
            <person name="Stern D.M."/>
            <person name="Schmidt A.M."/>
        </authorList>
    </citation>
    <scope>FUNCTION</scope>
</reference>
<reference key="13">
    <citation type="journal article" date="2000" name="Thromb. Haemost.">
        <title>Occurrence of amphoterin (HMG1) as an endogenous protein of human platelets that is exported to the cell surface upon platelet activation.</title>
        <authorList>
            <person name="Rouhiainen A."/>
            <person name="Imai S."/>
            <person name="Rauvala H."/>
            <person name="Parkkinen J."/>
        </authorList>
    </citation>
    <scope>PHOSPHOLIPID-BINDING</scope>
</reference>
<reference key="14">
    <citation type="journal article" date="2001" name="Biochemistry">
        <title>Thermodynamics of HMGB1 interaction with duplex DNA.</title>
        <authorList>
            <person name="Mueller S."/>
            <person name="Bianchi M.E."/>
            <person name="Knapp S."/>
        </authorList>
    </citation>
    <scope>DNA-BINDING</scope>
    <scope>DOMAIN</scope>
</reference>
<reference key="15">
    <citation type="journal article" date="2002" name="Cancer Res.">
        <title>Receptor for advanced glycation end products-binding COOH-terminal motif of amphoterin inhibits invasive migration and metastasis.</title>
        <authorList>
            <person name="Huttunen H.J."/>
            <person name="Fages C."/>
            <person name="Kuja-Panula J."/>
            <person name="Ridley A.J."/>
            <person name="Rauvala H."/>
        </authorList>
    </citation>
    <scope>FUNCTION</scope>
    <scope>LIGAND FOR AGER RECEPTOR</scope>
</reference>
<reference key="16">
    <citation type="journal article" date="2002" name="EMBO J.">
        <title>The DNA chaperone HMGB1 facilitates ACF/CHRAC-dependent nucleosome sliding.</title>
        <authorList>
            <person name="Bonaldi T."/>
            <person name="Langst G."/>
            <person name="Strohner R."/>
            <person name="Becker P.B."/>
            <person name="Bianchi M.E."/>
        </authorList>
    </citation>
    <scope>FUNCTION</scope>
</reference>
<reference key="17">
    <citation type="journal article" date="2002" name="Nature">
        <title>Release of chromatin protein HMGB1 by necrotic cells triggers inflammation.</title>
        <authorList>
            <person name="Scaffidi P."/>
            <person name="Misteli T."/>
            <person name="Bianchi M.E."/>
        </authorList>
    </citation>
    <scope>SUBCELLULAR LOCATION</scope>
</reference>
<reference key="18">
    <citation type="journal article" date="2003" name="EMBO J.">
        <title>Monocytic cells hyperacetylate chromatin protein HMGB1 to redirect it towards secretion.</title>
        <authorList>
            <person name="Bonaldi T."/>
            <person name="Talamo F."/>
            <person name="Scaffidi P."/>
            <person name="Ferrera D."/>
            <person name="Porto A."/>
            <person name="Bachi A."/>
            <person name="Rubartelli A."/>
            <person name="Agresti A."/>
            <person name="Bianchi M.E."/>
        </authorList>
    </citation>
    <scope>SUBCELLULAR LOCATION</scope>
    <scope>MUTAGENESIS OF 28-LYS--LYS-30 AND 182-LYS--LYS-184</scope>
    <scope>INTERACTION WITH XPO1</scope>
</reference>
<reference key="19">
    <citation type="journal article" date="2004" name="Biochemistry">
        <title>The long acidic tail of high mobility group box 1 (HMGB1) protein forms an extended and flexible structure that interacts with specific residues within and between the HMG boxes.</title>
        <authorList>
            <person name="Knapp S."/>
            <person name="Mueller S."/>
            <person name="Digilio G."/>
            <person name="Bonaldi T."/>
            <person name="Bianchi M.E."/>
            <person name="Musco G."/>
        </authorList>
    </citation>
    <scope>DOMAIN</scope>
</reference>
<reference key="20">
    <citation type="journal article" date="2005" name="Mol. Cell">
        <title>GR and HMGB1 interact only within chromatin and influence each other's residence time.</title>
        <authorList>
            <person name="Agresti A."/>
            <person name="Scaffidi P."/>
            <person name="Riva A."/>
            <person name="Caiolfa V.R."/>
            <person name="Bianchi M.E."/>
        </authorList>
    </citation>
    <scope>SUBCELLULAR LOCATION</scope>
    <scope>CHROMATIN-BINDING</scope>
    <scope>MUTAGENESIS OF PHE-38; PHE-103 AND ILE-122</scope>
</reference>
<reference key="21">
    <citation type="journal article" date="2006" name="Exp. Cell Res.">
        <title>Molecular basis for the redox control of nuclear transport of the structural chromatin protein Hmgb1.</title>
        <authorList>
            <person name="Hoppe G."/>
            <person name="Talcott K.E."/>
            <person name="Bhattacharya S.K."/>
            <person name="Crabb J.W."/>
            <person name="Sears J.E."/>
        </authorList>
    </citation>
    <scope>DISULFIDE BRIDGE</scope>
    <scope>REDOX FORMS</scope>
    <scope>MUTAGENESIS OF CYS-23; CYS-45 AND CYS-106</scope>
</reference>
<reference key="22">
    <citation type="journal article" date="2007" name="Biochemistry">
        <title>DNA bending versus DNA end joining activity of HMGB1 protein is modulated in vitro by acetylation.</title>
        <authorList>
            <person name="Ugrinova I."/>
            <person name="Mitkova E."/>
            <person name="Moskalenko C."/>
            <person name="Pashev I."/>
            <person name="Pasheva E."/>
        </authorList>
    </citation>
    <scope>ACETYLATION AT LYS-3</scope>
</reference>
<reference key="23">
    <citation type="journal article" date="2008" name="Shock">
        <title>Relationship between high-mobility group box 1 protein release and T-cell suppression in rats after thermal injury.</title>
        <authorList>
            <person name="Zhang L.T."/>
            <person name="Yao Y.M."/>
            <person name="Dong Y.Q."/>
            <person name="Dong N."/>
            <person name="Yu Y."/>
            <person name="Sheng Z.Y."/>
        </authorList>
    </citation>
    <scope>FUNCTION</scope>
</reference>
<reference key="24">
    <citation type="journal article" date="2010" name="J. Cell Biol.">
        <title>Endogenous HMGB1 regulates autophagy.</title>
        <authorList>
            <person name="Tang D."/>
            <person name="Kang R."/>
            <person name="Livesey K.M."/>
            <person name="Cheh C.W."/>
            <person name="Farkas A."/>
            <person name="Loughran P."/>
            <person name="Hoppe G."/>
            <person name="Bianchi M.E."/>
            <person name="Tracey K.J."/>
            <person name="Zeh H.J. III"/>
            <person name="Lotze M.T."/>
        </authorList>
    </citation>
    <scope>INTERACTION WITH BECN1</scope>
    <scope>MUTAGENESIS OF CYS-23; CYS-45 AND CYS-106</scope>
</reference>
<reference key="25">
    <citation type="journal article" date="2010" name="Proc. Natl. Acad. Sci. U.S.A.">
        <title>A critical cysteine is required for HMGB1 binding to Toll-like receptor 4 and activation of macrophage cytokine release.</title>
        <authorList>
            <person name="Yang H."/>
            <person name="Hreggvidsdottir H.S."/>
            <person name="Palmblad K."/>
            <person name="Wang H."/>
            <person name="Ochani M."/>
            <person name="Li J."/>
            <person name="Lu B."/>
            <person name="Chavan S."/>
            <person name="Rosas-Ballina M."/>
            <person name="Al-Abed Y."/>
            <person name="Akira S."/>
            <person name="Bierhaus A."/>
            <person name="Erlandsson-Harris H."/>
            <person name="Andersson U."/>
            <person name="Tracey K.J."/>
        </authorList>
    </citation>
    <scope>FUNCTION</scope>
    <scope>LIGAND FOR TLR4:LY96 RECEPTOR COMPLEX</scope>
    <scope>MUTAGENESIS OF CYS-106</scope>
</reference>
<reference key="26">
    <citation type="journal article" date="2012" name="J. Exp. Med.">
        <title>Mutually exclusive redox forms of HMGB1 promote cell recruitment or proinflammatory cytokine release.</title>
        <authorList>
            <person name="Venereau E."/>
            <person name="Casalgrandi M."/>
            <person name="Schiraldi M."/>
            <person name="Antoine D.J."/>
            <person name="Cattaneo A."/>
            <person name="De Marchis F."/>
            <person name="Liu J."/>
            <person name="Antonelli A."/>
            <person name="Preti A."/>
            <person name="Raeli L."/>
            <person name="Shams S.S."/>
            <person name="Yang H."/>
            <person name="Varani L."/>
            <person name="Andersson U."/>
            <person name="Tracey K.J."/>
            <person name="Bachi A."/>
            <person name="Uguccioni M."/>
            <person name="Bianchi M.E."/>
        </authorList>
    </citation>
    <scope>REDOX FORMS</scope>
    <scope>FUNCTION</scope>
    <scope>INTERACTION WITH CXCL12</scope>
    <scope>SUBCELLULAR LOCATION</scope>
    <scope>OXIDATION AT CYS-106</scope>
</reference>
<reference key="27">
    <citation type="journal article" date="2012" name="Mol. Med.">
        <title>Redox modification of cysteine residues regulates the cytokine activity of high mobility group box-1 (HMGB1).</title>
        <authorList>
            <person name="Yang H."/>
            <person name="Lundback P."/>
            <person name="Ottosson L."/>
            <person name="Erlandsson-Harris H."/>
            <person name="Venereau E."/>
            <person name="Bianchi M.E."/>
            <person name="Al-Abed Y."/>
            <person name="Andersson U."/>
            <person name="Tracey K.J."/>
            <person name="Antoine D.J."/>
        </authorList>
    </citation>
    <scope>RETRACTED PAPER</scope>
</reference>
<reference key="28">
    <citation type="journal article" date="2020" name="Mol. Med.">
        <title>Retraction Note to: Redox modification of cysteine residues regulates the cytokine activity of high mobility group box-1 (HMGB1).</title>
        <authorList>
            <person name="Yang H."/>
            <person name="Lundbaeck P."/>
            <person name="Ottosson L."/>
            <person name="Erlandsson-Harris H."/>
            <person name="Venereau E."/>
            <person name="Bianchi M.E."/>
            <person name="Al-Abed Y."/>
            <person name="Andersson U."/>
            <person name="Tracey K.J."/>
            <person name="Antoine D.J."/>
        </authorList>
    </citation>
    <scope>RETRACTION NOTICE OF PUBMED:22105604</scope>
</reference>
<reference key="29">
    <citation type="journal article" date="2013" name="Front. Immunol.">
        <title>HMGB1: The central cytokine for all lymphoid cells.</title>
        <authorList>
            <person name="Li G."/>
            <person name="Liang X."/>
            <person name="Lotze M.T."/>
        </authorList>
    </citation>
    <scope>REVIEW ON FUNCTION RELATED TO ADAPTIVE IMMUNITY</scope>
</reference>
<reference key="30">
    <citation type="journal article" date="2013" name="J. Leukoc. Biol.">
        <title>The many faces of HMGB1: molecular structure-functional activity in inflammation, apoptosis, and chemotaxis.</title>
        <authorList>
            <person name="Yang H."/>
            <person name="Antoine D.J."/>
            <person name="Andersson U."/>
            <person name="Tracey K.J."/>
        </authorList>
    </citation>
    <scope>REVIEW ON FUNCTION RELATED TO INFLAMMATION</scope>
</reference>
<reference key="31">
    <citation type="journal article" date="2013" name="Mol. Med.">
        <title>Signaling of high mobility group box 1 (HMGB1) through toll-like receptor 4 in macrophages requires CD14.</title>
        <authorList>
            <person name="Kim S."/>
            <person name="Kim S.Y."/>
            <person name="Pribis J.P."/>
            <person name="Lotze M."/>
            <person name="Mollen K.P."/>
            <person name="Shapiro R."/>
            <person name="Loughran P."/>
            <person name="Scott M.J."/>
            <person name="Billiar T.R."/>
        </authorList>
    </citation>
    <scope>FUNCTION</scope>
</reference>
<reference key="32">
    <citation type="journal article" date="2013" name="Semin. Cancer Biol.">
        <title>Menage a Trois in stress: DAMPs, redox and autophagy.</title>
        <authorList>
            <person name="Li G."/>
            <person name="Tang D."/>
            <person name="Lotze M.T."/>
        </authorList>
    </citation>
    <scope>REVIEW</scope>
</reference>
<reference key="33">
    <citation type="journal article" date="2014" name="PLoS ONE">
        <title>Binding of histone H1 to DNA is differentially modulated by redox state of HMGB1.</title>
        <authorList>
            <person name="Polanska E."/>
            <person name="Pospisilova S."/>
            <person name="Stros M."/>
        </authorList>
    </citation>
    <scope>FUNCTION</scope>
    <scope>REDOX FORMS</scope>
</reference>
<reference key="34">
    <citation type="journal article" date="2014" name="Yonsei Med. J.">
        <title>The role of high mobility group box 1 in innate immunity.</title>
        <authorList>
            <person name="Lee S.A."/>
            <person name="Kwak M.S."/>
            <person name="Kim S."/>
            <person name="Shin J.S."/>
        </authorList>
    </citation>
    <scope>REVIEW ON FUNCTION RELATED TO INNATE IMMUNITY</scope>
</reference>
<reference key="35">
    <citation type="journal article" date="1993" name="EMBO J.">
        <title>Structure of the HMG box motif in the B-domain of HMG1.</title>
        <authorList>
            <person name="Weir H.M."/>
            <person name="Kraulis P.J."/>
            <person name="Hill C.S."/>
            <person name="Raine A.R.C."/>
            <person name="Laue E.D."/>
            <person name="Thomas J.O."/>
        </authorList>
    </citation>
    <scope>STRUCTURE BY NMR OF 88-165</scope>
</reference>
<reference key="36">
    <citation type="journal article" date="1995" name="Biochemistry">
        <title>Structure of the A-domain of HMG1 and its interaction with DNA as studied by heteronuclear three- and four-dimensional NMR spectroscopy.</title>
        <authorList>
            <person name="Hardman C.H."/>
            <person name="Broadhurst R.W."/>
            <person name="Raine A.R.C."/>
            <person name="Grasser K.D."/>
            <person name="Thomas J.O."/>
            <person name="Laue E.D."/>
        </authorList>
    </citation>
    <scope>STRUCTURE BY NMR OF 1-84</scope>
    <source>
        <strain>Sprague-Dawley</strain>
    </source>
</reference>
<gene>
    <name type="primary">Hmgb1</name>
    <name type="synonym">Hmg-1</name>
    <name type="synonym">Hmg1</name>
</gene>
<sequence length="215" mass="24894">MGKGDPKKPRGKMSSYAFFVQTCREEHKKKHPDASVNFSEFSKKCSERWKTMSAKEKGKFEDMAKADKARYEREMKTYIPPKGETKKKFKDPNAPKRPPSAFFLFCSEYRPKIKGEHPGLSIGDVAKKLGEMWNNTAADDKQPYEKKAAKLKEKYEKDIAAYRAKGKPDAAKKGVVKAEKSKKKKEEEDDEEDEEDEEEEEEEEDEDEEEDDDDE</sequence>
<accession>P63159</accession>
<accession>P07155</accession>
<accession>P27109</accession>
<accession>P27428</accession>
<accession>Q548R9</accession>
<feature type="initiator methionine" description="Removed" evidence="25">
    <location>
        <position position="1"/>
    </location>
</feature>
<feature type="chain" id="PRO_0000048530" description="High mobility group protein B1">
    <location>
        <begin position="2"/>
        <end position="215"/>
    </location>
</feature>
<feature type="DNA-binding region" description="HMG box 1" evidence="4">
    <location>
        <begin position="9"/>
        <end position="79"/>
    </location>
</feature>
<feature type="DNA-binding region" description="HMG box 2" evidence="4">
    <location>
        <begin position="95"/>
        <end position="163"/>
    </location>
</feature>
<feature type="region of interest" description="Sufficient for interaction with HAVCR2" evidence="3">
    <location>
        <begin position="2"/>
        <end position="97"/>
    </location>
</feature>
<feature type="region of interest" description="LPS binding (delipidated)" evidence="1">
    <location>
        <begin position="3"/>
        <end position="15"/>
    </location>
</feature>
<feature type="region of interest" description="Disordered" evidence="5">
    <location>
        <begin position="76"/>
        <end position="95"/>
    </location>
</feature>
<feature type="region of interest" description="LPS binding (Lipid A)" evidence="1">
    <location>
        <begin position="80"/>
        <end position="96"/>
    </location>
</feature>
<feature type="region of interest" description="Cytokine-stimulating activity" evidence="1">
    <location>
        <begin position="89"/>
        <end position="108"/>
    </location>
</feature>
<feature type="region of interest" description="Binding to AGER/RAGE" evidence="12">
    <location>
        <begin position="150"/>
        <end position="183"/>
    </location>
</feature>
<feature type="region of interest" description="Disordered" evidence="5">
    <location>
        <begin position="161"/>
        <end position="215"/>
    </location>
</feature>
<feature type="short sequence motif" description="Nuclear localization signal (NLS) 1" evidence="14">
    <location>
        <begin position="27"/>
        <end position="43"/>
    </location>
</feature>
<feature type="short sequence motif" description="Nuclear localization signal (NLS) 2" evidence="14">
    <location>
        <begin position="178"/>
        <end position="184"/>
    </location>
</feature>
<feature type="compositionally biased region" description="Basic and acidic residues" evidence="5">
    <location>
        <begin position="83"/>
        <end position="94"/>
    </location>
</feature>
<feature type="compositionally biased region" description="Basic and acidic residues" evidence="5">
    <location>
        <begin position="161"/>
        <end position="179"/>
    </location>
</feature>
<feature type="compositionally biased region" description="Acidic residues" evidence="5">
    <location>
        <begin position="187"/>
        <end position="215"/>
    </location>
</feature>
<feature type="binding site" evidence="2">
    <location>
        <begin position="2"/>
        <end position="10"/>
    </location>
    <ligand>
        <name>heparin</name>
        <dbReference type="ChEBI" id="CHEBI:28304"/>
    </ligand>
</feature>
<feature type="site" description="Cleavage; by thrombin:thrombomodulin" evidence="2">
    <location>
        <begin position="10"/>
        <end position="11"/>
    </location>
</feature>
<feature type="site" description="Cleavage; by CASP1" evidence="1">
    <location>
        <begin position="67"/>
        <end position="68"/>
    </location>
</feature>
<feature type="modified residue" description="N6-acetyllysine" evidence="18">
    <location>
        <position position="3"/>
    </location>
</feature>
<feature type="modified residue" description="N6-acetyllysine" evidence="2">
    <location>
        <position position="7"/>
    </location>
</feature>
<feature type="modified residue" description="N6-acetyllysine" evidence="2">
    <location>
        <position position="8"/>
    </location>
</feature>
<feature type="modified residue" description="N6-acetyllysine" evidence="2">
    <location>
        <position position="12"/>
    </location>
</feature>
<feature type="modified residue" description="Cysteine sulfonic acid (-SO3H); alternate" evidence="30">
    <location>
        <position position="23"/>
    </location>
</feature>
<feature type="modified residue" description="N6-acetyllysine" evidence="2">
    <location>
        <position position="28"/>
    </location>
</feature>
<feature type="modified residue" description="N6-acetyllysine" evidence="2">
    <location>
        <position position="29"/>
    </location>
</feature>
<feature type="modified residue" description="N6-acetyllysine" evidence="2">
    <location>
        <position position="30"/>
    </location>
</feature>
<feature type="modified residue" description="Phosphoserine" evidence="1">
    <location>
        <position position="35"/>
    </location>
</feature>
<feature type="modified residue" description="N6-acetyllysine" evidence="3">
    <location>
        <position position="43"/>
    </location>
</feature>
<feature type="modified residue" description="Cysteine sulfonic acid (-SO3H); alternate" evidence="30">
    <location>
        <position position="45"/>
    </location>
</feature>
<feature type="modified residue" description="N6-acetyllysine" evidence="3">
    <location>
        <position position="90"/>
    </location>
</feature>
<feature type="modified residue" description="Phosphoserine" evidence="1">
    <location>
        <position position="100"/>
    </location>
</feature>
<feature type="modified residue" description="Cysteine sulfonic acid (-SO3H)" evidence="30">
    <location>
        <position position="106"/>
    </location>
</feature>
<feature type="modified residue" description="N6-acetyllysine" evidence="2">
    <location>
        <position position="127"/>
    </location>
</feature>
<feature type="modified residue" description="N6-acetyllysine" evidence="2">
    <location>
        <position position="128"/>
    </location>
</feature>
<feature type="modified residue" description="N6-acetyllysine" evidence="3">
    <location>
        <position position="141"/>
    </location>
</feature>
<feature type="modified residue" description="N6-acetyllysine" evidence="2">
    <location>
        <position position="172"/>
    </location>
</feature>
<feature type="modified residue" description="N6-acetyllysine" evidence="2">
    <location>
        <position position="173"/>
    </location>
</feature>
<feature type="modified residue" description="N6-acetyllysine" evidence="2">
    <location>
        <position position="177"/>
    </location>
</feature>
<feature type="modified residue" description="N6-acetyllysine" evidence="2">
    <location>
        <position position="180"/>
    </location>
</feature>
<feature type="modified residue" description="ADP-ribosylserine" evidence="1">
    <location>
        <position position="181"/>
    </location>
</feature>
<feature type="modified residue" description="N6-acetyllysine" evidence="2">
    <location>
        <position position="182"/>
    </location>
</feature>
<feature type="modified residue" description="N6-acetyllysine" evidence="2">
    <location>
        <position position="183"/>
    </location>
</feature>
<feature type="modified residue" description="N6-acetyllysine" evidence="2">
    <location>
        <position position="184"/>
    </location>
</feature>
<feature type="modified residue" description="N6-acetyllysine" evidence="2">
    <location>
        <position position="185"/>
    </location>
</feature>
<feature type="disulfide bond" description="In disulfide HMGB1; alternate" evidence="17 23 24">
    <location>
        <begin position="23"/>
        <end position="45"/>
    </location>
</feature>
<feature type="cross-link" description="Isoglutamyl lysine isopeptide (Lys-Gln) (interchain with Q-?)" evidence="1">
    <location>
        <position position="28"/>
    </location>
</feature>
<feature type="cross-link" description="Isoglutamyl lysine isopeptide (Lys-Gln) (interchain with Q-?)" evidence="1">
    <location>
        <position position="43"/>
    </location>
</feature>
<feature type="cross-link" description="Isoglutamyl lysine isopeptide (Lys-Gln) (interchain with Q-?)" evidence="1">
    <location>
        <position position="44"/>
    </location>
</feature>
<feature type="cross-link" description="Isoglutamyl lysine isopeptide (Lys-Gln) (interchain with Q-?)" evidence="1">
    <location>
        <position position="68"/>
    </location>
</feature>
<feature type="cross-link" description="Isoglutamyl lysine isopeptide (Lys-Gln) (interchain with Q-?)" evidence="1">
    <location>
        <position position="180"/>
    </location>
</feature>
<feature type="cross-link" description="Isoglutamyl lysine isopeptide (Lys-Gln) (interchain with Q-?)" evidence="1">
    <location>
        <position position="182"/>
    </location>
</feature>
<feature type="cross-link" description="Isoglutamyl lysine isopeptide (Lys-Gln) (interchain with Q-?)" evidence="1">
    <location>
        <position position="183"/>
    </location>
</feature>
<feature type="cross-link" description="Isoglutamyl lysine isopeptide (Lys-Gln) (interchain with Q-?)" evidence="1">
    <location>
        <position position="184"/>
    </location>
</feature>
<feature type="mutagenesis site" description="No effect on nuclear localization. Decreases interaction with BCN1 and impairs in autophagy induction. Abolishes cytokine-stimulating activity and no effect on chemoattractant activity; when associated with S-45." evidence="17 22 23">
    <original>C</original>
    <variation>S</variation>
    <location>
        <position position="23"/>
    </location>
</feature>
<feature type="mutagenesis site" description="Partial cytoplasmic localization; when associated with 181-A--A-183." evidence="14">
    <original>KKK</original>
    <variation>AAA</variation>
    <location>
        <begin position="28"/>
        <end position="30"/>
    </location>
</feature>
<feature type="mutagenesis site" description="Partial cytoplasmic localization (mimicks acetylation); when associated with 181-Q--Q-183." evidence="14">
    <original>KKK</original>
    <variation>QQQ</variation>
    <location>
        <begin position="28"/>
        <end position="30"/>
    </location>
</feature>
<feature type="mutagenesis site" description="Disrupts association with chromatin; when associated A-103 and A-122." evidence="16">
    <original>F</original>
    <variation>A</variation>
    <location>
        <position position="38"/>
    </location>
</feature>
<feature type="mutagenesis site" description="No effect on nuclear localization. Decreases interaction with BCN1 and impairs autophagy induction. Abolishes cytokine-stimulating activity and no effect on chemoattractant activity; when associated with S-23." evidence="17 22 23">
    <original>C</original>
    <variation>S</variation>
    <location>
        <position position="45"/>
    </location>
</feature>
<feature type="mutagenesis site" description="Disrupts association with chromatin; when associated A-38 and A-122." evidence="16">
    <original>F</original>
    <variation>A</variation>
    <location>
        <position position="103"/>
    </location>
</feature>
<feature type="mutagenesis site" description="Disrupts interaction with TLR4:LY96 receptor complex and abolishes TNF release from macrophages." evidence="21">
    <original>C</original>
    <variation>A</variation>
    <location>
        <position position="106"/>
    </location>
</feature>
<feature type="mutagenesis site" description="Abolishes cytokine-stimulating activity; no effect on chemoattractant activity; impaired nuclear and enhanced cytoplasmic localization, retained activity in autophagy regulation." evidence="17 22 23">
    <original>C</original>
    <variation>S</variation>
    <location>
        <position position="106"/>
    </location>
</feature>
<feature type="mutagenesis site" description="Disrupts association with chromatin; when associated A-38 and A-103." evidence="16">
    <original>I</original>
    <variation>A</variation>
    <location>
        <position position="122"/>
    </location>
</feature>
<feature type="mutagenesis site" description="Partial cytoplasmic localization; when associated with 27-A--A-29." evidence="14">
    <original>KKK</original>
    <variation>AAA</variation>
    <location>
        <begin position="182"/>
        <end position="184"/>
    </location>
</feature>
<feature type="mutagenesis site" description="Partial cytoplasmic localization (mimicks acetylation); when associated with 27-Q--Q-29." evidence="14">
    <original>KKK</original>
    <variation>QQQ</variation>
    <location>
        <begin position="182"/>
        <end position="184"/>
    </location>
</feature>
<feature type="helix" evidence="39">
    <location>
        <begin position="15"/>
        <end position="30"/>
    </location>
</feature>
<feature type="turn" evidence="36">
    <location>
        <begin position="32"/>
        <end position="34"/>
    </location>
</feature>
<feature type="helix" evidence="39">
    <location>
        <begin position="38"/>
        <end position="51"/>
    </location>
</feature>
<feature type="helix" evidence="39">
    <location>
        <begin position="54"/>
        <end position="76"/>
    </location>
</feature>
<feature type="helix" evidence="38">
    <location>
        <begin position="86"/>
        <end position="88"/>
    </location>
</feature>
<feature type="helix" evidence="37">
    <location>
        <begin position="103"/>
        <end position="116"/>
    </location>
</feature>
<feature type="helix" evidence="37">
    <location>
        <begin position="122"/>
        <end position="135"/>
    </location>
</feature>
<feature type="helix" evidence="37">
    <location>
        <begin position="138"/>
        <end position="140"/>
    </location>
</feature>
<feature type="helix" evidence="37">
    <location>
        <begin position="142"/>
        <end position="159"/>
    </location>
</feature>
<name>HMGB1_RAT</name>
<dbReference type="EMBL" id="M64986">
    <property type="protein sequence ID" value="AAA40729.1"/>
    <property type="molecule type" value="mRNA"/>
</dbReference>
<dbReference type="EMBL" id="Y00463">
    <property type="protein sequence ID" value="CAA68526.1"/>
    <property type="molecule type" value="mRNA"/>
</dbReference>
<dbReference type="EMBL" id="AF275734">
    <property type="protein sequence ID" value="AAF82799.1"/>
    <property type="molecule type" value="mRNA"/>
</dbReference>
<dbReference type="EMBL" id="BC061779">
    <property type="protein sequence ID" value="AAH61779.1"/>
    <property type="molecule type" value="mRNA"/>
</dbReference>
<dbReference type="EMBL" id="BC081839">
    <property type="protein sequence ID" value="AAH81839.1"/>
    <property type="molecule type" value="mRNA"/>
</dbReference>
<dbReference type="EMBL" id="BC088402">
    <property type="protein sequence ID" value="AAH88402.1"/>
    <property type="molecule type" value="mRNA"/>
</dbReference>
<dbReference type="PIR" id="A41175">
    <property type="entry name" value="NSRTH1"/>
</dbReference>
<dbReference type="RefSeq" id="NP_037095.1">
    <property type="nucleotide sequence ID" value="NM_012963.4"/>
</dbReference>
<dbReference type="RefSeq" id="XP_038945040.1">
    <property type="nucleotide sequence ID" value="XM_039089112.2"/>
</dbReference>
<dbReference type="RefSeq" id="XP_063127150.1">
    <property type="nucleotide sequence ID" value="XM_063271080.1"/>
</dbReference>
<dbReference type="RefSeq" id="XP_063127151.1">
    <property type="nucleotide sequence ID" value="XM_063271081.1"/>
</dbReference>
<dbReference type="RefSeq" id="XP_063127152.1">
    <property type="nucleotide sequence ID" value="XM_063271082.1"/>
</dbReference>
<dbReference type="PDB" id="1AAB">
    <property type="method" value="NMR"/>
    <property type="chains" value="A=2-84"/>
</dbReference>
<dbReference type="PDB" id="1CKT">
    <property type="method" value="X-ray"/>
    <property type="resolution" value="2.50 A"/>
    <property type="chains" value="A=8-78"/>
</dbReference>
<dbReference type="PDB" id="1HME">
    <property type="method" value="NMR"/>
    <property type="chains" value="A=89-165"/>
</dbReference>
<dbReference type="PDB" id="1HMF">
    <property type="method" value="NMR"/>
    <property type="chains" value="A=89-165"/>
</dbReference>
<dbReference type="PDB" id="2GZK">
    <property type="method" value="NMR"/>
    <property type="chains" value="A=82-165"/>
</dbReference>
<dbReference type="PDB" id="4QR9">
    <property type="method" value="X-ray"/>
    <property type="resolution" value="2.00 A"/>
    <property type="chains" value="A/B=8-81"/>
</dbReference>
<dbReference type="PDBsum" id="1AAB"/>
<dbReference type="PDBsum" id="1CKT"/>
<dbReference type="PDBsum" id="1HME"/>
<dbReference type="PDBsum" id="1HMF"/>
<dbReference type="PDBsum" id="2GZK"/>
<dbReference type="PDBsum" id="4QR9"/>
<dbReference type="SASBDB" id="P63159"/>
<dbReference type="SMR" id="P63159"/>
<dbReference type="BioGRID" id="247493">
    <property type="interactions" value="7"/>
</dbReference>
<dbReference type="FunCoup" id="P63159">
    <property type="interactions" value="2467"/>
</dbReference>
<dbReference type="IntAct" id="P63159">
    <property type="interactions" value="2"/>
</dbReference>
<dbReference type="STRING" id="10116.ENSRNOP00000043407"/>
<dbReference type="MoonProt" id="P63159"/>
<dbReference type="CarbonylDB" id="P63159"/>
<dbReference type="iPTMnet" id="P63159"/>
<dbReference type="PhosphoSitePlus" id="P63159"/>
<dbReference type="jPOST" id="P63159"/>
<dbReference type="PaxDb" id="10116-ENSRNOP00000040874"/>
<dbReference type="ABCD" id="P63159">
    <property type="antibodies" value="4 sequenced antibodies"/>
</dbReference>
<dbReference type="GeneID" id="25459"/>
<dbReference type="KEGG" id="rno:25459"/>
<dbReference type="AGR" id="RGD:2802"/>
<dbReference type="CTD" id="3146"/>
<dbReference type="RGD" id="2802">
    <property type="gene designation" value="Hmgb1"/>
</dbReference>
<dbReference type="eggNOG" id="KOG0381">
    <property type="taxonomic scope" value="Eukaryota"/>
</dbReference>
<dbReference type="InParanoid" id="P63159"/>
<dbReference type="OrthoDB" id="1919336at2759"/>
<dbReference type="PhylomeDB" id="P63159"/>
<dbReference type="Reactome" id="R-RNO-140342">
    <property type="pathway name" value="Apoptosis induced DNA fragmentation"/>
</dbReference>
<dbReference type="Reactome" id="R-RNO-445989">
    <property type="pathway name" value="TAK1-dependent IKK and NF-kappa-B activation"/>
</dbReference>
<dbReference type="Reactome" id="R-RNO-5620971">
    <property type="pathway name" value="Pyroptosis"/>
</dbReference>
<dbReference type="Reactome" id="R-RNO-5686938">
    <property type="pathway name" value="Regulation of TLR by endogenous ligand"/>
</dbReference>
<dbReference type="Reactome" id="R-RNO-6798695">
    <property type="pathway name" value="Neutrophil degranulation"/>
</dbReference>
<dbReference type="Reactome" id="R-RNO-879415">
    <property type="pathway name" value="Advanced glycosylation endproduct receptor signaling"/>
</dbReference>
<dbReference type="Reactome" id="R-RNO-933542">
    <property type="pathway name" value="TRAF6 mediated NF-kB activation"/>
</dbReference>
<dbReference type="EvolutionaryTrace" id="P63159"/>
<dbReference type="PRO" id="PR:P63159"/>
<dbReference type="Proteomes" id="UP000002494">
    <property type="component" value="Unplaced"/>
</dbReference>
<dbReference type="GO" id="GO:0035868">
    <property type="term" value="C:alphav-beta3 integrin-HMGB1 complex"/>
    <property type="evidence" value="ECO:0000266"/>
    <property type="project" value="RGD"/>
</dbReference>
<dbReference type="GO" id="GO:0009986">
    <property type="term" value="C:cell surface"/>
    <property type="evidence" value="ECO:0000266"/>
    <property type="project" value="RGD"/>
</dbReference>
<dbReference type="GO" id="GO:0000785">
    <property type="term" value="C:chromatin"/>
    <property type="evidence" value="ECO:0000266"/>
    <property type="project" value="RGD"/>
</dbReference>
<dbReference type="GO" id="GO:0000793">
    <property type="term" value="C:condensed chromosome"/>
    <property type="evidence" value="ECO:0000266"/>
    <property type="project" value="RGD"/>
</dbReference>
<dbReference type="GO" id="GO:0005737">
    <property type="term" value="C:cytoplasm"/>
    <property type="evidence" value="ECO:0000266"/>
    <property type="project" value="RGD"/>
</dbReference>
<dbReference type="GO" id="GO:0005829">
    <property type="term" value="C:cytosol"/>
    <property type="evidence" value="ECO:0000314"/>
    <property type="project" value="CAFA"/>
</dbReference>
<dbReference type="GO" id="GO:0005769">
    <property type="term" value="C:early endosome"/>
    <property type="evidence" value="ECO:0000266"/>
    <property type="project" value="RGD"/>
</dbReference>
<dbReference type="GO" id="GO:0005783">
    <property type="term" value="C:endoplasmic reticulum"/>
    <property type="evidence" value="ECO:0000266"/>
    <property type="project" value="RGD"/>
</dbReference>
<dbReference type="GO" id="GO:0005793">
    <property type="term" value="C:endoplasmic reticulum-Golgi intermediate compartment"/>
    <property type="evidence" value="ECO:0007669"/>
    <property type="project" value="UniProtKB-SubCell"/>
</dbReference>
<dbReference type="GO" id="GO:0005615">
    <property type="term" value="C:extracellular space"/>
    <property type="evidence" value="ECO:0000314"/>
    <property type="project" value="RGD"/>
</dbReference>
<dbReference type="GO" id="GO:0045121">
    <property type="term" value="C:membrane raft"/>
    <property type="evidence" value="ECO:0000314"/>
    <property type="project" value="CAFA"/>
</dbReference>
<dbReference type="GO" id="GO:0043005">
    <property type="term" value="C:neuron projection"/>
    <property type="evidence" value="ECO:0000266"/>
    <property type="project" value="RGD"/>
</dbReference>
<dbReference type="GO" id="GO:0005634">
    <property type="term" value="C:nucleus"/>
    <property type="evidence" value="ECO:0000266"/>
    <property type="project" value="RGD"/>
</dbReference>
<dbReference type="GO" id="GO:0017053">
    <property type="term" value="C:transcription repressor complex"/>
    <property type="evidence" value="ECO:0000266"/>
    <property type="project" value="RGD"/>
</dbReference>
<dbReference type="GO" id="GO:0008097">
    <property type="term" value="F:5S rRNA binding"/>
    <property type="evidence" value="ECO:0000314"/>
    <property type="project" value="RGD"/>
</dbReference>
<dbReference type="GO" id="GO:0003681">
    <property type="term" value="F:bent DNA binding"/>
    <property type="evidence" value="ECO:0000314"/>
    <property type="project" value="MGI"/>
</dbReference>
<dbReference type="GO" id="GO:0000405">
    <property type="term" value="F:bubble DNA binding"/>
    <property type="evidence" value="ECO:0000250"/>
    <property type="project" value="AgBase"/>
</dbReference>
<dbReference type="GO" id="GO:0019958">
    <property type="term" value="F:C-X-C chemokine binding"/>
    <property type="evidence" value="ECO:0000266"/>
    <property type="project" value="RGD"/>
</dbReference>
<dbReference type="GO" id="GO:0010858">
    <property type="term" value="F:calcium-dependent protein kinase regulator activity"/>
    <property type="evidence" value="ECO:0000266"/>
    <property type="project" value="RGD"/>
</dbReference>
<dbReference type="GO" id="GO:0000402">
    <property type="term" value="F:crossed form four-way junction DNA binding"/>
    <property type="evidence" value="ECO:0000314"/>
    <property type="project" value="MGI"/>
</dbReference>
<dbReference type="GO" id="GO:0005125">
    <property type="term" value="F:cytokine activity"/>
    <property type="evidence" value="ECO:0000314"/>
    <property type="project" value="UniProtKB"/>
</dbReference>
<dbReference type="GO" id="GO:0003684">
    <property type="term" value="F:damaged DNA binding"/>
    <property type="evidence" value="ECO:0000266"/>
    <property type="project" value="RGD"/>
</dbReference>
<dbReference type="GO" id="GO:0008301">
    <property type="term" value="F:DNA binding, bending"/>
    <property type="evidence" value="ECO:0000314"/>
    <property type="project" value="RGD"/>
</dbReference>
<dbReference type="GO" id="GO:0070182">
    <property type="term" value="F:DNA polymerase binding"/>
    <property type="evidence" value="ECO:0000266"/>
    <property type="project" value="RGD"/>
</dbReference>
<dbReference type="GO" id="GO:0140297">
    <property type="term" value="F:DNA-binding transcription factor binding"/>
    <property type="evidence" value="ECO:0000266"/>
    <property type="project" value="RGD"/>
</dbReference>
<dbReference type="GO" id="GO:0003690">
    <property type="term" value="F:double-stranded DNA binding"/>
    <property type="evidence" value="ECO:0000314"/>
    <property type="project" value="RGD"/>
</dbReference>
<dbReference type="GO" id="GO:0003725">
    <property type="term" value="F:double-stranded RNA binding"/>
    <property type="evidence" value="ECO:0000266"/>
    <property type="project" value="RGD"/>
</dbReference>
<dbReference type="GO" id="GO:0000400">
    <property type="term" value="F:four-way junction DNA binding"/>
    <property type="evidence" value="ECO:0000314"/>
    <property type="project" value="RGD"/>
</dbReference>
<dbReference type="GO" id="GO:0051861">
    <property type="term" value="F:glycolipid binding"/>
    <property type="evidence" value="ECO:0000314"/>
    <property type="project" value="RGD"/>
</dbReference>
<dbReference type="GO" id="GO:0008201">
    <property type="term" value="F:heparin binding"/>
    <property type="evidence" value="ECO:0000314"/>
    <property type="project" value="RGD"/>
</dbReference>
<dbReference type="GO" id="GO:0005178">
    <property type="term" value="F:integrin binding"/>
    <property type="evidence" value="ECO:0000266"/>
    <property type="project" value="RGD"/>
</dbReference>
<dbReference type="GO" id="GO:0001530">
    <property type="term" value="F:lipopolysaccharide binding"/>
    <property type="evidence" value="ECO:0000266"/>
    <property type="project" value="RGD"/>
</dbReference>
<dbReference type="GO" id="GO:0016829">
    <property type="term" value="F:lyase activity"/>
    <property type="evidence" value="ECO:0000266"/>
    <property type="project" value="RGD"/>
</dbReference>
<dbReference type="GO" id="GO:0044378">
    <property type="term" value="F:non-sequence-specific DNA binding, bending"/>
    <property type="evidence" value="ECO:0000266"/>
    <property type="project" value="RGD"/>
</dbReference>
<dbReference type="GO" id="GO:0003676">
    <property type="term" value="F:nucleic acid binding"/>
    <property type="evidence" value="ECO:0000266"/>
    <property type="project" value="RGD"/>
</dbReference>
<dbReference type="GO" id="GO:0000401">
    <property type="term" value="F:open form four-way junction DNA binding"/>
    <property type="evidence" value="ECO:0000314"/>
    <property type="project" value="MGI"/>
</dbReference>
<dbReference type="GO" id="GO:0042277">
    <property type="term" value="F:peptide binding"/>
    <property type="evidence" value="ECO:0000314"/>
    <property type="project" value="RGD"/>
</dbReference>
<dbReference type="GO" id="GO:0001786">
    <property type="term" value="F:phosphatidylserine binding"/>
    <property type="evidence" value="ECO:0000266"/>
    <property type="project" value="RGD"/>
</dbReference>
<dbReference type="GO" id="GO:0046982">
    <property type="term" value="F:protein heterodimerization activity"/>
    <property type="evidence" value="ECO:0000269"/>
    <property type="project" value="DisProt"/>
</dbReference>
<dbReference type="GO" id="GO:0030295">
    <property type="term" value="F:protein kinase activator activity"/>
    <property type="evidence" value="ECO:0000266"/>
    <property type="project" value="RGD"/>
</dbReference>
<dbReference type="GO" id="GO:0050786">
    <property type="term" value="F:RAGE receptor binding"/>
    <property type="evidence" value="ECO:0000315"/>
    <property type="project" value="RGD"/>
</dbReference>
<dbReference type="GO" id="GO:0048018">
    <property type="term" value="F:receptor ligand activity"/>
    <property type="evidence" value="ECO:0000266"/>
    <property type="project" value="RGD"/>
</dbReference>
<dbReference type="GO" id="GO:0061629">
    <property type="term" value="F:RNA polymerase II-specific DNA-binding transcription factor binding"/>
    <property type="evidence" value="ECO:0000266"/>
    <property type="project" value="RGD"/>
</dbReference>
<dbReference type="GO" id="GO:0003697">
    <property type="term" value="F:single-stranded DNA binding"/>
    <property type="evidence" value="ECO:0000314"/>
    <property type="project" value="RGD"/>
</dbReference>
<dbReference type="GO" id="GO:0003727">
    <property type="term" value="F:single-stranded RNA binding"/>
    <property type="evidence" value="ECO:0000266"/>
    <property type="project" value="RGD"/>
</dbReference>
<dbReference type="GO" id="GO:0097100">
    <property type="term" value="F:supercoiled DNA binding"/>
    <property type="evidence" value="ECO:0000250"/>
    <property type="project" value="AgBase"/>
</dbReference>
<dbReference type="GO" id="GO:0000976">
    <property type="term" value="F:transcription cis-regulatory region binding"/>
    <property type="evidence" value="ECO:0000266"/>
    <property type="project" value="RGD"/>
</dbReference>
<dbReference type="GO" id="GO:0003713">
    <property type="term" value="F:transcription coactivator activity"/>
    <property type="evidence" value="ECO:0000266"/>
    <property type="project" value="RGD"/>
</dbReference>
<dbReference type="GO" id="GO:0003714">
    <property type="term" value="F:transcription corepressor activity"/>
    <property type="evidence" value="ECO:0000266"/>
    <property type="project" value="RGD"/>
</dbReference>
<dbReference type="GO" id="GO:0030036">
    <property type="term" value="P:actin cytoskeleton organization"/>
    <property type="evidence" value="ECO:0000314"/>
    <property type="project" value="RGD"/>
</dbReference>
<dbReference type="GO" id="GO:0002218">
    <property type="term" value="P:activation of innate immune response"/>
    <property type="evidence" value="ECO:0000266"/>
    <property type="project" value="RGD"/>
</dbReference>
<dbReference type="GO" id="GO:0043277">
    <property type="term" value="P:apoptotic cell clearance"/>
    <property type="evidence" value="ECO:0000250"/>
    <property type="project" value="UniProtKB"/>
</dbReference>
<dbReference type="GO" id="GO:0006914">
    <property type="term" value="P:autophagy"/>
    <property type="evidence" value="ECO:0007669"/>
    <property type="project" value="UniProtKB-KW"/>
</dbReference>
<dbReference type="GO" id="GO:0006284">
    <property type="term" value="P:base-excision repair"/>
    <property type="evidence" value="ECO:0000266"/>
    <property type="project" value="RGD"/>
</dbReference>
<dbReference type="GO" id="GO:0000902">
    <property type="term" value="P:cell morphogenesis"/>
    <property type="evidence" value="ECO:0000315"/>
    <property type="project" value="RGD"/>
</dbReference>
<dbReference type="GO" id="GO:0071347">
    <property type="term" value="P:cellular response to interleukin-1"/>
    <property type="evidence" value="ECO:0000270"/>
    <property type="project" value="RGD"/>
</dbReference>
<dbReference type="GO" id="GO:0098761">
    <property type="term" value="P:cellular response to interleukin-7"/>
    <property type="evidence" value="ECO:0000266"/>
    <property type="project" value="RGD"/>
</dbReference>
<dbReference type="GO" id="GO:0071222">
    <property type="term" value="P:cellular response to lipopolysaccharide"/>
    <property type="evidence" value="ECO:0000266"/>
    <property type="project" value="RGD"/>
</dbReference>
<dbReference type="GO" id="GO:0006935">
    <property type="term" value="P:chemotaxis"/>
    <property type="evidence" value="ECO:0000314"/>
    <property type="project" value="RGD"/>
</dbReference>
<dbReference type="GO" id="GO:0006325">
    <property type="term" value="P:chromatin organization"/>
    <property type="evidence" value="ECO:0000266"/>
    <property type="project" value="RGD"/>
</dbReference>
<dbReference type="GO" id="GO:0007623">
    <property type="term" value="P:circadian rhythm"/>
    <property type="evidence" value="ECO:0000270"/>
    <property type="project" value="RGD"/>
</dbReference>
<dbReference type="GO" id="GO:0032392">
    <property type="term" value="P:DNA geometric change"/>
    <property type="evidence" value="ECO:0000314"/>
    <property type="project" value="MGI"/>
</dbReference>
<dbReference type="GO" id="GO:0006302">
    <property type="term" value="P:double-strand break repair"/>
    <property type="evidence" value="ECO:0000314"/>
    <property type="project" value="UniProtKB"/>
</dbReference>
<dbReference type="GO" id="GO:0006303">
    <property type="term" value="P:double-strand break repair via nonhomologous end joining"/>
    <property type="evidence" value="ECO:0000266"/>
    <property type="project" value="RGD"/>
</dbReference>
<dbReference type="GO" id="GO:0035767">
    <property type="term" value="P:endothelial cell chemotaxis"/>
    <property type="evidence" value="ECO:0000266"/>
    <property type="project" value="RGD"/>
</dbReference>
<dbReference type="GO" id="GO:0001935">
    <property type="term" value="P:endothelial cell proliferation"/>
    <property type="evidence" value="ECO:0000266"/>
    <property type="project" value="RGD"/>
</dbReference>
<dbReference type="GO" id="GO:0001654">
    <property type="term" value="P:eye development"/>
    <property type="evidence" value="ECO:0000266"/>
    <property type="project" value="RGD"/>
</dbReference>
<dbReference type="GO" id="GO:0005980">
    <property type="term" value="P:glycogen catabolic process"/>
    <property type="evidence" value="ECO:0000266"/>
    <property type="project" value="RGD"/>
</dbReference>
<dbReference type="GO" id="GO:0031507">
    <property type="term" value="P:heterochromatin formation"/>
    <property type="evidence" value="ECO:0000266"/>
    <property type="project" value="RGD"/>
</dbReference>
<dbReference type="GO" id="GO:0050930">
    <property type="term" value="P:induction of positive chemotaxis"/>
    <property type="evidence" value="ECO:0000314"/>
    <property type="project" value="MGI"/>
</dbReference>
<dbReference type="GO" id="GO:0006954">
    <property type="term" value="P:inflammatory response"/>
    <property type="evidence" value="ECO:0000266"/>
    <property type="project" value="RGD"/>
</dbReference>
<dbReference type="GO" id="GO:0002437">
    <property type="term" value="P:inflammatory response to antigenic stimulus"/>
    <property type="evidence" value="ECO:0000266"/>
    <property type="project" value="RGD"/>
</dbReference>
<dbReference type="GO" id="GO:0030324">
    <property type="term" value="P:lung development"/>
    <property type="evidence" value="ECO:0000266"/>
    <property type="project" value="RGD"/>
</dbReference>
<dbReference type="GO" id="GO:0002281">
    <property type="term" value="P:macrophage activation involved in immune response"/>
    <property type="evidence" value="ECO:0000266"/>
    <property type="project" value="RGD"/>
</dbReference>
<dbReference type="GO" id="GO:0050831">
    <property type="term" value="P:male-specific defense response to bacterium"/>
    <property type="evidence" value="ECO:0000314"/>
    <property type="project" value="RGD"/>
</dbReference>
<dbReference type="GO" id="GO:0002755">
    <property type="term" value="P:MyD88-dependent toll-like receptor signaling pathway"/>
    <property type="evidence" value="ECO:0000266"/>
    <property type="project" value="RGD"/>
</dbReference>
<dbReference type="GO" id="GO:0030099">
    <property type="term" value="P:myeloid cell differentiation"/>
    <property type="evidence" value="ECO:0000266"/>
    <property type="project" value="RGD"/>
</dbReference>
<dbReference type="GO" id="GO:0001773">
    <property type="term" value="P:myeloid dendritic cell activation"/>
    <property type="evidence" value="ECO:0000266"/>
    <property type="project" value="RGD"/>
</dbReference>
<dbReference type="GO" id="GO:0002318">
    <property type="term" value="P:myeloid progenitor cell differentiation"/>
    <property type="evidence" value="ECO:0000266"/>
    <property type="project" value="RGD"/>
</dbReference>
<dbReference type="GO" id="GO:0051450">
    <property type="term" value="P:myoblast proliferation"/>
    <property type="evidence" value="ECO:0000315"/>
    <property type="project" value="RGD"/>
</dbReference>
<dbReference type="GO" id="GO:2000426">
    <property type="term" value="P:negative regulation of apoptotic cell clearance"/>
    <property type="evidence" value="ECO:0000266"/>
    <property type="project" value="RGD"/>
</dbReference>
<dbReference type="GO" id="GO:0043537">
    <property type="term" value="P:negative regulation of blood vessel endothelial cell migration"/>
    <property type="evidence" value="ECO:0000266"/>
    <property type="project" value="RGD"/>
</dbReference>
<dbReference type="GO" id="GO:0043371">
    <property type="term" value="P:negative regulation of CD4-positive, alpha-beta T cell differentiation"/>
    <property type="evidence" value="ECO:0000266"/>
    <property type="project" value="RGD"/>
</dbReference>
<dbReference type="GO" id="GO:0008156">
    <property type="term" value="P:negative regulation of DNA replication"/>
    <property type="evidence" value="ECO:0000314"/>
    <property type="project" value="RGD"/>
</dbReference>
<dbReference type="GO" id="GO:0017055">
    <property type="term" value="P:negative regulation of RNA polymerase II transcription preinitiation complex assembly"/>
    <property type="evidence" value="ECO:0000266"/>
    <property type="project" value="RGD"/>
</dbReference>
<dbReference type="GO" id="GO:0000122">
    <property type="term" value="P:negative regulation of transcription by RNA polymerase II"/>
    <property type="evidence" value="ECO:0000266"/>
    <property type="project" value="RGD"/>
</dbReference>
<dbReference type="GO" id="GO:0032689">
    <property type="term" value="P:negative regulation of type II interferon production"/>
    <property type="evidence" value="ECO:0000266"/>
    <property type="project" value="RGD"/>
</dbReference>
<dbReference type="GO" id="GO:0007399">
    <property type="term" value="P:nervous system development"/>
    <property type="evidence" value="ECO:0000315"/>
    <property type="project" value="RGD"/>
</dbReference>
<dbReference type="GO" id="GO:0051402">
    <property type="term" value="P:neuron apoptotic process"/>
    <property type="evidence" value="ECO:0000315"/>
    <property type="project" value="RGD"/>
</dbReference>
<dbReference type="GO" id="GO:0031175">
    <property type="term" value="P:neuron projection development"/>
    <property type="evidence" value="ECO:0000316"/>
    <property type="project" value="UniProtKB"/>
</dbReference>
<dbReference type="GO" id="GO:0097350">
    <property type="term" value="P:neutrophil clearance"/>
    <property type="evidence" value="ECO:0000250"/>
    <property type="project" value="UniProtKB"/>
</dbReference>
<dbReference type="GO" id="GO:0006334">
    <property type="term" value="P:nucleosome assembly"/>
    <property type="evidence" value="ECO:0000266"/>
    <property type="project" value="RGD"/>
</dbReference>
<dbReference type="GO" id="GO:0002270">
    <property type="term" value="P:plasmacytoid dendritic cell activation"/>
    <property type="evidence" value="ECO:0000266"/>
    <property type="project" value="RGD"/>
</dbReference>
<dbReference type="GO" id="GO:0042104">
    <property type="term" value="P:positive regulation of activated T cell proliferation"/>
    <property type="evidence" value="ECO:0000266"/>
    <property type="project" value="RGD"/>
</dbReference>
<dbReference type="GO" id="GO:0043065">
    <property type="term" value="P:positive regulation of apoptotic process"/>
    <property type="evidence" value="ECO:0000315"/>
    <property type="project" value="RGD"/>
</dbReference>
<dbReference type="GO" id="GO:0010508">
    <property type="term" value="P:positive regulation of autophagy"/>
    <property type="evidence" value="ECO:0000315"/>
    <property type="project" value="RGD"/>
</dbReference>
<dbReference type="GO" id="GO:0043536">
    <property type="term" value="P:positive regulation of blood vessel endothelial cell migration"/>
    <property type="evidence" value="ECO:0000266"/>
    <property type="project" value="RGD"/>
</dbReference>
<dbReference type="GO" id="GO:0030335">
    <property type="term" value="P:positive regulation of cell migration"/>
    <property type="evidence" value="ECO:0000314"/>
    <property type="project" value="MGI"/>
</dbReference>
<dbReference type="GO" id="GO:0008284">
    <property type="term" value="P:positive regulation of cell population proliferation"/>
    <property type="evidence" value="ECO:0000314"/>
    <property type="project" value="RGD"/>
</dbReference>
<dbReference type="GO" id="GO:2000343">
    <property type="term" value="P:positive regulation of chemokine (C-X-C motif) ligand 2 production"/>
    <property type="evidence" value="ECO:0000266"/>
    <property type="project" value="RGD"/>
</dbReference>
<dbReference type="GO" id="GO:0007204">
    <property type="term" value="P:positive regulation of cytosolic calcium ion concentration"/>
    <property type="evidence" value="ECO:0000266"/>
    <property type="project" value="RGD"/>
</dbReference>
<dbReference type="GO" id="GO:2001200">
    <property type="term" value="P:positive regulation of dendritic cell differentiation"/>
    <property type="evidence" value="ECO:0000266"/>
    <property type="project" value="RGD"/>
</dbReference>
<dbReference type="GO" id="GO:0070374">
    <property type="term" value="P:positive regulation of ERK1 and ERK2 cascade"/>
    <property type="evidence" value="ECO:0000266"/>
    <property type="project" value="RGD"/>
</dbReference>
<dbReference type="GO" id="GO:0045819">
    <property type="term" value="P:positive regulation of glycogen catabolic process"/>
    <property type="evidence" value="ECO:0000266"/>
    <property type="project" value="RGD"/>
</dbReference>
<dbReference type="GO" id="GO:0045089">
    <property type="term" value="P:positive regulation of innate immune response"/>
    <property type="evidence" value="ECO:0000266"/>
    <property type="project" value="RGD"/>
</dbReference>
<dbReference type="GO" id="GO:0032727">
    <property type="term" value="P:positive regulation of interferon-alpha production"/>
    <property type="evidence" value="ECO:0000266"/>
    <property type="project" value="RGD"/>
</dbReference>
<dbReference type="GO" id="GO:0032728">
    <property type="term" value="P:positive regulation of interferon-beta production"/>
    <property type="evidence" value="ECO:0000266"/>
    <property type="project" value="RGD"/>
</dbReference>
<dbReference type="GO" id="GO:0032731">
    <property type="term" value="P:positive regulation of interleukin-1 beta production"/>
    <property type="evidence" value="ECO:0000266"/>
    <property type="project" value="RGD"/>
</dbReference>
<dbReference type="GO" id="GO:0032732">
    <property type="term" value="P:positive regulation of interleukin-1 production"/>
    <property type="evidence" value="ECO:0000314"/>
    <property type="project" value="UniProtKB"/>
</dbReference>
<dbReference type="GO" id="GO:0032733">
    <property type="term" value="P:positive regulation of interleukin-10 production"/>
    <property type="evidence" value="ECO:0000266"/>
    <property type="project" value="RGD"/>
</dbReference>
<dbReference type="GO" id="GO:0032735">
    <property type="term" value="P:positive regulation of interleukin-12 production"/>
    <property type="evidence" value="ECO:0000266"/>
    <property type="project" value="RGD"/>
</dbReference>
<dbReference type="GO" id="GO:0032755">
    <property type="term" value="P:positive regulation of interleukin-6 production"/>
    <property type="evidence" value="ECO:0000314"/>
    <property type="project" value="UniProtKB"/>
</dbReference>
<dbReference type="GO" id="GO:0032757">
    <property type="term" value="P:positive regulation of interleukin-8 production"/>
    <property type="evidence" value="ECO:0000314"/>
    <property type="project" value="UniProtKB"/>
</dbReference>
<dbReference type="GO" id="GO:0046330">
    <property type="term" value="P:positive regulation of JNK cascade"/>
    <property type="evidence" value="ECO:0000266"/>
    <property type="project" value="RGD"/>
</dbReference>
<dbReference type="GO" id="GO:0071642">
    <property type="term" value="P:positive regulation of macrophage inflammatory protein 1 alpha production"/>
    <property type="evidence" value="ECO:0000314"/>
    <property type="project" value="UniProtKB"/>
</dbReference>
<dbReference type="GO" id="GO:0043410">
    <property type="term" value="P:positive regulation of MAPK cascade"/>
    <property type="evidence" value="ECO:0000266"/>
    <property type="project" value="RGD"/>
</dbReference>
<dbReference type="GO" id="GO:0002053">
    <property type="term" value="P:positive regulation of mesenchymal cell proliferation"/>
    <property type="evidence" value="ECO:0000314"/>
    <property type="project" value="MGI"/>
</dbReference>
<dbReference type="GO" id="GO:0032425">
    <property type="term" value="P:positive regulation of mismatch repair"/>
    <property type="evidence" value="ECO:0000266"/>
    <property type="project" value="RGD"/>
</dbReference>
<dbReference type="GO" id="GO:0045931">
    <property type="term" value="P:positive regulation of mitotic cell cycle"/>
    <property type="evidence" value="ECO:0000314"/>
    <property type="project" value="MGI"/>
</dbReference>
<dbReference type="GO" id="GO:0071639">
    <property type="term" value="P:positive regulation of monocyte chemotactic protein-1 production"/>
    <property type="evidence" value="ECO:0000266"/>
    <property type="project" value="RGD"/>
</dbReference>
<dbReference type="GO" id="GO:0090026">
    <property type="term" value="P:positive regulation of monocyte chemotaxis"/>
    <property type="evidence" value="ECO:0000266"/>
    <property type="project" value="RGD"/>
</dbReference>
<dbReference type="GO" id="GO:0033034">
    <property type="term" value="P:positive regulation of myeloid cell apoptotic process"/>
    <property type="evidence" value="ECO:0000314"/>
    <property type="project" value="RGD"/>
</dbReference>
<dbReference type="GO" id="GO:0045639">
    <property type="term" value="P:positive regulation of myeloid cell differentiation"/>
    <property type="evidence" value="ECO:0000266"/>
    <property type="project" value="RGD"/>
</dbReference>
<dbReference type="GO" id="GO:1905455">
    <property type="term" value="P:positive regulation of myeloid progenitor cell differentiation"/>
    <property type="evidence" value="ECO:0000266"/>
    <property type="project" value="RGD"/>
</dbReference>
<dbReference type="GO" id="GO:0045663">
    <property type="term" value="P:positive regulation of myoblast differentiation"/>
    <property type="evidence" value="ECO:0000315"/>
    <property type="project" value="RGD"/>
</dbReference>
<dbReference type="GO" id="GO:0010976">
    <property type="term" value="P:positive regulation of neuron projection development"/>
    <property type="evidence" value="ECO:0000315"/>
    <property type="project" value="RGD"/>
</dbReference>
<dbReference type="GO" id="GO:1901224">
    <property type="term" value="P:positive regulation of non-canonical NF-kappaB signal transduction"/>
    <property type="evidence" value="ECO:0000266"/>
    <property type="project" value="RGD"/>
</dbReference>
<dbReference type="GO" id="GO:0014911">
    <property type="term" value="P:positive regulation of smooth muscle cell migration"/>
    <property type="evidence" value="ECO:0000314"/>
    <property type="project" value="RGD"/>
</dbReference>
<dbReference type="GO" id="GO:1903672">
    <property type="term" value="P:positive regulation of sprouting angiogenesis"/>
    <property type="evidence" value="ECO:0000266"/>
    <property type="project" value="RGD"/>
</dbReference>
<dbReference type="GO" id="GO:0034137">
    <property type="term" value="P:positive regulation of toll-like receptor 2 signaling pathway"/>
    <property type="evidence" value="ECO:0000266"/>
    <property type="project" value="RGD"/>
</dbReference>
<dbReference type="GO" id="GO:0034145">
    <property type="term" value="P:positive regulation of toll-like receptor 4 signaling pathway"/>
    <property type="evidence" value="ECO:0000266"/>
    <property type="project" value="RGD"/>
</dbReference>
<dbReference type="GO" id="GO:0034165">
    <property type="term" value="P:positive regulation of toll-like receptor 9 signaling pathway"/>
    <property type="evidence" value="ECO:0000250"/>
    <property type="project" value="UniProtKB"/>
</dbReference>
<dbReference type="GO" id="GO:0045944">
    <property type="term" value="P:positive regulation of transcription by RNA polymerase II"/>
    <property type="evidence" value="ECO:0000266"/>
    <property type="project" value="RGD"/>
</dbReference>
<dbReference type="GO" id="GO:0032760">
    <property type="term" value="P:positive regulation of tumor necrosis factor production"/>
    <property type="evidence" value="ECO:0000314"/>
    <property type="project" value="UniProtKB"/>
</dbReference>
<dbReference type="GO" id="GO:1905564">
    <property type="term" value="P:positive regulation of vascular endothelial cell proliferation"/>
    <property type="evidence" value="ECO:0000266"/>
    <property type="project" value="RGD"/>
</dbReference>
<dbReference type="GO" id="GO:0090303">
    <property type="term" value="P:positive regulation of wound healing"/>
    <property type="evidence" value="ECO:0000266"/>
    <property type="project" value="RGD"/>
</dbReference>
<dbReference type="GO" id="GO:0065003">
    <property type="term" value="P:protein-containing complex assembly"/>
    <property type="evidence" value="ECO:0000314"/>
    <property type="project" value="RGD"/>
</dbReference>
<dbReference type="GO" id="GO:2000819">
    <property type="term" value="P:regulation of nucleotide-excision repair"/>
    <property type="evidence" value="ECO:0000266"/>
    <property type="project" value="RGD"/>
</dbReference>
<dbReference type="GO" id="GO:0002840">
    <property type="term" value="P:regulation of T cell mediated immune response to tumor cell"/>
    <property type="evidence" value="ECO:0000250"/>
    <property type="project" value="UniProtKB"/>
</dbReference>
<dbReference type="GO" id="GO:0002643">
    <property type="term" value="P:regulation of tolerance induction"/>
    <property type="evidence" value="ECO:0000266"/>
    <property type="project" value="RGD"/>
</dbReference>
<dbReference type="GO" id="GO:0006357">
    <property type="term" value="P:regulation of transcription by RNA polymerase II"/>
    <property type="evidence" value="ECO:0000318"/>
    <property type="project" value="GO_Central"/>
</dbReference>
<dbReference type="GO" id="GO:0045471">
    <property type="term" value="P:response to ethanol"/>
    <property type="evidence" value="ECO:0000270"/>
    <property type="project" value="RGD"/>
</dbReference>
<dbReference type="GO" id="GO:0051384">
    <property type="term" value="P:response to glucocorticoid"/>
    <property type="evidence" value="ECO:0000266"/>
    <property type="project" value="RGD"/>
</dbReference>
<dbReference type="GO" id="GO:0009749">
    <property type="term" value="P:response to glucose"/>
    <property type="evidence" value="ECO:0000270"/>
    <property type="project" value="RGD"/>
</dbReference>
<dbReference type="GO" id="GO:0032868">
    <property type="term" value="P:response to insulin"/>
    <property type="evidence" value="ECO:0000270"/>
    <property type="project" value="RGD"/>
</dbReference>
<dbReference type="GO" id="GO:0032496">
    <property type="term" value="P:response to lipopolysaccharide"/>
    <property type="evidence" value="ECO:0000270"/>
    <property type="project" value="RGD"/>
</dbReference>
<dbReference type="GO" id="GO:0034341">
    <property type="term" value="P:response to type II interferon"/>
    <property type="evidence" value="ECO:0000315"/>
    <property type="project" value="RGD"/>
</dbReference>
<dbReference type="GO" id="GO:0009410">
    <property type="term" value="P:response to xenobiotic stimulus"/>
    <property type="evidence" value="ECO:0000270"/>
    <property type="project" value="RGD"/>
</dbReference>
<dbReference type="GO" id="GO:0035711">
    <property type="term" value="P:T-helper 1 cell activation"/>
    <property type="evidence" value="ECO:0000266"/>
    <property type="project" value="RGD"/>
</dbReference>
<dbReference type="GO" id="GO:0045063">
    <property type="term" value="P:T-helper 1 cell differentiation"/>
    <property type="evidence" value="ECO:0000266"/>
    <property type="project" value="RGD"/>
</dbReference>
<dbReference type="GO" id="GO:0034134">
    <property type="term" value="P:toll-like receptor 2 signaling pathway"/>
    <property type="evidence" value="ECO:0000266"/>
    <property type="project" value="RGD"/>
</dbReference>
<dbReference type="GO" id="GO:0034142">
    <property type="term" value="P:toll-like receptor 4 signaling pathway"/>
    <property type="evidence" value="ECO:0000266"/>
    <property type="project" value="RGD"/>
</dbReference>
<dbReference type="GO" id="GO:0006366">
    <property type="term" value="P:transcription by RNA polymerase II"/>
    <property type="evidence" value="ECO:0000266"/>
    <property type="project" value="RGD"/>
</dbReference>
<dbReference type="GO" id="GO:0033151">
    <property type="term" value="P:V(D)J recombination"/>
    <property type="evidence" value="ECO:0000266"/>
    <property type="project" value="RGD"/>
</dbReference>
<dbReference type="CDD" id="cd21978">
    <property type="entry name" value="HMG-box_HMGB_rpt1"/>
    <property type="match status" value="1"/>
</dbReference>
<dbReference type="CDD" id="cd21979">
    <property type="entry name" value="HMG-box_HMGB_rpt2"/>
    <property type="match status" value="1"/>
</dbReference>
<dbReference type="DisProt" id="DP02138"/>
<dbReference type="FunFam" id="1.10.30.10:FF:000006">
    <property type="entry name" value="High mobility group protein B1"/>
    <property type="match status" value="1"/>
</dbReference>
<dbReference type="FunFam" id="1.10.30.10:FF:000015">
    <property type="entry name" value="high mobility group protein B1"/>
    <property type="match status" value="1"/>
</dbReference>
<dbReference type="Gene3D" id="1.10.30.10">
    <property type="entry name" value="High mobility group box domain"/>
    <property type="match status" value="2"/>
</dbReference>
<dbReference type="InterPro" id="IPR009071">
    <property type="entry name" value="HMG_box_dom"/>
</dbReference>
<dbReference type="InterPro" id="IPR036910">
    <property type="entry name" value="HMG_box_dom_sf"/>
</dbReference>
<dbReference type="InterPro" id="IPR017967">
    <property type="entry name" value="HMG_boxA_CS"/>
</dbReference>
<dbReference type="InterPro" id="IPR050342">
    <property type="entry name" value="HMGB"/>
</dbReference>
<dbReference type="PANTHER" id="PTHR48112:SF35">
    <property type="entry name" value="HIGH MOBILITY GROUP PROTEIN B1"/>
    <property type="match status" value="1"/>
</dbReference>
<dbReference type="PANTHER" id="PTHR48112">
    <property type="entry name" value="HIGH MOBILITY GROUP PROTEIN DSP1"/>
    <property type="match status" value="1"/>
</dbReference>
<dbReference type="Pfam" id="PF00505">
    <property type="entry name" value="HMG_box"/>
    <property type="match status" value="1"/>
</dbReference>
<dbReference type="Pfam" id="PF09011">
    <property type="entry name" value="HMG_box_2"/>
    <property type="match status" value="1"/>
</dbReference>
<dbReference type="PRINTS" id="PR00886">
    <property type="entry name" value="HIGHMOBLTY12"/>
</dbReference>
<dbReference type="SMART" id="SM00398">
    <property type="entry name" value="HMG"/>
    <property type="match status" value="2"/>
</dbReference>
<dbReference type="SUPFAM" id="SSF47095">
    <property type="entry name" value="HMG-box"/>
    <property type="match status" value="2"/>
</dbReference>
<dbReference type="PROSITE" id="PS00353">
    <property type="entry name" value="HMG_BOX_1"/>
    <property type="match status" value="1"/>
</dbReference>
<dbReference type="PROSITE" id="PS50118">
    <property type="entry name" value="HMG_BOX_2"/>
    <property type="match status" value="2"/>
</dbReference>
<keyword id="KW-0002">3D-structure</keyword>
<keyword id="KW-0007">Acetylation</keyword>
<keyword id="KW-1064">Adaptive immunity</keyword>
<keyword id="KW-0013">ADP-ribosylation</keyword>
<keyword id="KW-0072">Autophagy</keyword>
<keyword id="KW-1003">Cell membrane</keyword>
<keyword id="KW-0145">Chemotaxis</keyword>
<keyword id="KW-0158">Chromosome</keyword>
<keyword id="KW-0963">Cytoplasm</keyword>
<keyword id="KW-0903">Direct protein sequencing</keyword>
<keyword id="KW-1015">Disulfide bond</keyword>
<keyword id="KW-0227">DNA damage</keyword>
<keyword id="KW-0233">DNA recombination</keyword>
<keyword id="KW-0234">DNA repair</keyword>
<keyword id="KW-0238">DNA-binding</keyword>
<keyword id="KW-0967">Endosome</keyword>
<keyword id="KW-0358">Heparin-binding</keyword>
<keyword id="KW-0391">Immunity</keyword>
<keyword id="KW-0395">Inflammatory response</keyword>
<keyword id="KW-0399">Innate immunity</keyword>
<keyword id="KW-1017">Isopeptide bond</keyword>
<keyword id="KW-0472">Membrane</keyword>
<keyword id="KW-0539">Nucleus</keyword>
<keyword id="KW-0558">Oxidation</keyword>
<keyword id="KW-0597">Phosphoprotein</keyword>
<keyword id="KW-1185">Reference proteome</keyword>
<keyword id="KW-0677">Repeat</keyword>
<keyword id="KW-0964">Secreted</keyword>